<comment type="function">
    <text evidence="1">Binds as a heterodimer with protein bS6 to the central domain of the 16S rRNA, where it helps stabilize the platform of the 30S subunit.</text>
</comment>
<comment type="subunit">
    <text evidence="1">Part of the 30S ribosomal subunit. Forms a tight heterodimer with protein bS6.</text>
</comment>
<comment type="similarity">
    <text evidence="1">Belongs to the bacterial ribosomal protein bS18 family.</text>
</comment>
<gene>
    <name evidence="1" type="primary">rpsR</name>
    <name type="ordered locus">VFMJ11_2423</name>
</gene>
<keyword id="KW-0687">Ribonucleoprotein</keyword>
<keyword id="KW-0689">Ribosomal protein</keyword>
<keyword id="KW-0694">RNA-binding</keyword>
<keyword id="KW-0699">rRNA-binding</keyword>
<dbReference type="EMBL" id="CP001139">
    <property type="protein sequence ID" value="ACH66388.1"/>
    <property type="molecule type" value="Genomic_DNA"/>
</dbReference>
<dbReference type="RefSeq" id="WP_005421136.1">
    <property type="nucleotide sequence ID" value="NC_011184.1"/>
</dbReference>
<dbReference type="SMR" id="B5FBQ1"/>
<dbReference type="GeneID" id="56276704"/>
<dbReference type="KEGG" id="vfm:VFMJ11_2423"/>
<dbReference type="HOGENOM" id="CLU_148710_2_3_6"/>
<dbReference type="Proteomes" id="UP000001857">
    <property type="component" value="Chromosome I"/>
</dbReference>
<dbReference type="GO" id="GO:0022627">
    <property type="term" value="C:cytosolic small ribosomal subunit"/>
    <property type="evidence" value="ECO:0007669"/>
    <property type="project" value="TreeGrafter"/>
</dbReference>
<dbReference type="GO" id="GO:0070181">
    <property type="term" value="F:small ribosomal subunit rRNA binding"/>
    <property type="evidence" value="ECO:0007669"/>
    <property type="project" value="TreeGrafter"/>
</dbReference>
<dbReference type="GO" id="GO:0003735">
    <property type="term" value="F:structural constituent of ribosome"/>
    <property type="evidence" value="ECO:0007669"/>
    <property type="project" value="InterPro"/>
</dbReference>
<dbReference type="GO" id="GO:0006412">
    <property type="term" value="P:translation"/>
    <property type="evidence" value="ECO:0007669"/>
    <property type="project" value="UniProtKB-UniRule"/>
</dbReference>
<dbReference type="FunFam" id="4.10.640.10:FF:000001">
    <property type="entry name" value="30S ribosomal protein S18"/>
    <property type="match status" value="1"/>
</dbReference>
<dbReference type="Gene3D" id="4.10.640.10">
    <property type="entry name" value="Ribosomal protein S18"/>
    <property type="match status" value="1"/>
</dbReference>
<dbReference type="HAMAP" id="MF_00270">
    <property type="entry name" value="Ribosomal_bS18"/>
    <property type="match status" value="1"/>
</dbReference>
<dbReference type="InterPro" id="IPR001648">
    <property type="entry name" value="Ribosomal_bS18"/>
</dbReference>
<dbReference type="InterPro" id="IPR018275">
    <property type="entry name" value="Ribosomal_bS18_CS"/>
</dbReference>
<dbReference type="InterPro" id="IPR036870">
    <property type="entry name" value="Ribosomal_bS18_sf"/>
</dbReference>
<dbReference type="NCBIfam" id="TIGR00165">
    <property type="entry name" value="S18"/>
    <property type="match status" value="1"/>
</dbReference>
<dbReference type="PANTHER" id="PTHR13479">
    <property type="entry name" value="30S RIBOSOMAL PROTEIN S18"/>
    <property type="match status" value="1"/>
</dbReference>
<dbReference type="PANTHER" id="PTHR13479:SF40">
    <property type="entry name" value="SMALL RIBOSOMAL SUBUNIT PROTEIN BS18M"/>
    <property type="match status" value="1"/>
</dbReference>
<dbReference type="Pfam" id="PF01084">
    <property type="entry name" value="Ribosomal_S18"/>
    <property type="match status" value="1"/>
</dbReference>
<dbReference type="PRINTS" id="PR00974">
    <property type="entry name" value="RIBOSOMALS18"/>
</dbReference>
<dbReference type="SUPFAM" id="SSF46911">
    <property type="entry name" value="Ribosomal protein S18"/>
    <property type="match status" value="1"/>
</dbReference>
<dbReference type="PROSITE" id="PS00057">
    <property type="entry name" value="RIBOSOMAL_S18"/>
    <property type="match status" value="1"/>
</dbReference>
<feature type="chain" id="PRO_1000114465" description="Small ribosomal subunit protein bS18">
    <location>
        <begin position="1"/>
        <end position="75"/>
    </location>
</feature>
<organism>
    <name type="scientific">Aliivibrio fischeri (strain MJ11)</name>
    <name type="common">Vibrio fischeri</name>
    <dbReference type="NCBI Taxonomy" id="388396"/>
    <lineage>
        <taxon>Bacteria</taxon>
        <taxon>Pseudomonadati</taxon>
        <taxon>Pseudomonadota</taxon>
        <taxon>Gammaproteobacteria</taxon>
        <taxon>Vibrionales</taxon>
        <taxon>Vibrionaceae</taxon>
        <taxon>Aliivibrio</taxon>
    </lineage>
</organism>
<reference key="1">
    <citation type="submission" date="2008-08" db="EMBL/GenBank/DDBJ databases">
        <title>Complete sequence of Vibrio fischeri strain MJ11.</title>
        <authorList>
            <person name="Mandel M.J."/>
            <person name="Stabb E.V."/>
            <person name="Ruby E.G."/>
            <person name="Ferriera S."/>
            <person name="Johnson J."/>
            <person name="Kravitz S."/>
            <person name="Beeson K."/>
            <person name="Sutton G."/>
            <person name="Rogers Y.-H."/>
            <person name="Friedman R."/>
            <person name="Frazier M."/>
            <person name="Venter J.C."/>
        </authorList>
    </citation>
    <scope>NUCLEOTIDE SEQUENCE [LARGE SCALE GENOMIC DNA]</scope>
    <source>
        <strain>MJ11</strain>
    </source>
</reference>
<proteinExistence type="inferred from homology"/>
<sequence length="75" mass="8897">MARFFRRRKFCRFTAEGVQEIDYKDVATLKNYITEAGKIVPSRITGTRAKYQRQLARAIKRSRYLALLPYTDKHL</sequence>
<protein>
    <recommendedName>
        <fullName evidence="1">Small ribosomal subunit protein bS18</fullName>
    </recommendedName>
    <alternativeName>
        <fullName evidence="2">30S ribosomal protein S18</fullName>
    </alternativeName>
</protein>
<accession>B5FBQ1</accession>
<evidence type="ECO:0000255" key="1">
    <source>
        <dbReference type="HAMAP-Rule" id="MF_00270"/>
    </source>
</evidence>
<evidence type="ECO:0000305" key="2"/>
<name>RS18_ALIFM</name>